<organism>
    <name type="scientific">Cryptococcus neoformans var. neoformans serotype D (strain B-3501A)</name>
    <name type="common">Filobasidiella neoformans</name>
    <dbReference type="NCBI Taxonomy" id="283643"/>
    <lineage>
        <taxon>Eukaryota</taxon>
        <taxon>Fungi</taxon>
        <taxon>Dikarya</taxon>
        <taxon>Basidiomycota</taxon>
        <taxon>Agaricomycotina</taxon>
        <taxon>Tremellomycetes</taxon>
        <taxon>Tremellales</taxon>
        <taxon>Cryptococcaceae</taxon>
        <taxon>Cryptococcus</taxon>
        <taxon>Cryptococcus neoformans species complex</taxon>
    </lineage>
</organism>
<feature type="chain" id="PRO_0000410148" description="Vacuolar fusion protein MON1">
    <location>
        <begin position="1"/>
        <end position="620"/>
    </location>
</feature>
<feature type="region of interest" description="Disordered" evidence="3">
    <location>
        <begin position="1"/>
        <end position="165"/>
    </location>
</feature>
<feature type="compositionally biased region" description="Polar residues" evidence="3">
    <location>
        <begin position="1"/>
        <end position="33"/>
    </location>
</feature>
<feature type="compositionally biased region" description="Polar residues" evidence="3">
    <location>
        <begin position="41"/>
        <end position="58"/>
    </location>
</feature>
<feature type="compositionally biased region" description="Low complexity" evidence="3">
    <location>
        <begin position="73"/>
        <end position="90"/>
    </location>
</feature>
<feature type="compositionally biased region" description="Basic and acidic residues" evidence="3">
    <location>
        <begin position="93"/>
        <end position="102"/>
    </location>
</feature>
<feature type="compositionally biased region" description="Polar residues" evidence="3">
    <location>
        <begin position="123"/>
        <end position="132"/>
    </location>
</feature>
<feature type="compositionally biased region" description="Basic and acidic residues" evidence="3">
    <location>
        <begin position="135"/>
        <end position="148"/>
    </location>
</feature>
<gene>
    <name type="primary">MON1</name>
    <name type="ordered locus">CNBD5300</name>
</gene>
<comment type="function">
    <text evidence="2">In complex with CCZ1, is required for multiple vacuole delivery pathways including the cytoplasm to vacuole transport (Cvt), autophagy, pexophagy and endocytosis. The MON1-CCZ1 complex acts at the fusion of vesicles with the vacuole, through its regulation of the SNARE complex during the coordinated priming and docking stages of fusion, and particularly at the stage of tethering/docking.</text>
</comment>
<comment type="subcellular location">
    <subcellularLocation>
        <location evidence="1">Endosome</location>
        <location evidence="1">Multivesicular body membrane</location>
        <topology evidence="1">Peripheral membrane protein</topology>
    </subcellularLocation>
    <subcellularLocation>
        <location evidence="1">Prevacuolar compartment membrane</location>
        <topology evidence="1">Peripheral membrane protein</topology>
    </subcellularLocation>
    <subcellularLocation>
        <location evidence="1">Vacuole membrane</location>
        <topology evidence="1">Peripheral membrane protein</topology>
    </subcellularLocation>
</comment>
<comment type="similarity">
    <text evidence="4">Belongs to the MON1/SAND family.</text>
</comment>
<dbReference type="EMBL" id="AAEY01000021">
    <property type="protein sequence ID" value="EAL21154.1"/>
    <property type="molecule type" value="Genomic_DNA"/>
</dbReference>
<dbReference type="RefSeq" id="XP_775801.1">
    <property type="nucleotide sequence ID" value="XM_770708.1"/>
</dbReference>
<dbReference type="SMR" id="P0CO83"/>
<dbReference type="GeneID" id="4935919"/>
<dbReference type="KEGG" id="cnb:CNBD5300"/>
<dbReference type="VEuPathDB" id="FungiDB:CNBD5300"/>
<dbReference type="HOGENOM" id="CLU_014574_2_0_1"/>
<dbReference type="OrthoDB" id="3332at5206"/>
<dbReference type="GO" id="GO:0000329">
    <property type="term" value="C:fungal-type vacuole membrane"/>
    <property type="evidence" value="ECO:0007669"/>
    <property type="project" value="TreeGrafter"/>
</dbReference>
<dbReference type="GO" id="GO:0035658">
    <property type="term" value="C:Mon1-Ccz1 complex"/>
    <property type="evidence" value="ECO:0007669"/>
    <property type="project" value="TreeGrafter"/>
</dbReference>
<dbReference type="GO" id="GO:0032585">
    <property type="term" value="C:multivesicular body membrane"/>
    <property type="evidence" value="ECO:0007669"/>
    <property type="project" value="UniProtKB-SubCell"/>
</dbReference>
<dbReference type="GO" id="GO:0006914">
    <property type="term" value="P:autophagy"/>
    <property type="evidence" value="ECO:0007669"/>
    <property type="project" value="UniProtKB-KW"/>
</dbReference>
<dbReference type="GO" id="GO:0006623">
    <property type="term" value="P:protein targeting to vacuole"/>
    <property type="evidence" value="ECO:0007669"/>
    <property type="project" value="InterPro"/>
</dbReference>
<dbReference type="GO" id="GO:0016192">
    <property type="term" value="P:vesicle-mediated transport"/>
    <property type="evidence" value="ECO:0007669"/>
    <property type="project" value="InterPro"/>
</dbReference>
<dbReference type="InterPro" id="IPR043972">
    <property type="entry name" value="FUZ/MON1/HPS1_longin_1"/>
</dbReference>
<dbReference type="InterPro" id="IPR043971">
    <property type="entry name" value="FUZ/MON1/HPS1_longin_2"/>
</dbReference>
<dbReference type="InterPro" id="IPR043970">
    <property type="entry name" value="FUZ/MON1/HPS1_longin_3"/>
</dbReference>
<dbReference type="InterPro" id="IPR004353">
    <property type="entry name" value="Mon1"/>
</dbReference>
<dbReference type="PANTHER" id="PTHR13027">
    <property type="entry name" value="SAND PROTEIN-RELATED"/>
    <property type="match status" value="1"/>
</dbReference>
<dbReference type="PANTHER" id="PTHR13027:SF7">
    <property type="entry name" value="VACUOLAR FUSION PROTEIN MON1 HOMOLOG"/>
    <property type="match status" value="1"/>
</dbReference>
<dbReference type="Pfam" id="PF19036">
    <property type="entry name" value="Fuz_longin_1"/>
    <property type="match status" value="1"/>
</dbReference>
<dbReference type="Pfam" id="PF19037">
    <property type="entry name" value="Fuz_longin_2"/>
    <property type="match status" value="1"/>
</dbReference>
<dbReference type="Pfam" id="PF19038">
    <property type="entry name" value="Fuz_longin_3"/>
    <property type="match status" value="1"/>
</dbReference>
<dbReference type="PRINTS" id="PR01546">
    <property type="entry name" value="YEAST73DUF"/>
</dbReference>
<proteinExistence type="inferred from homology"/>
<protein>
    <recommendedName>
        <fullName>Vacuolar fusion protein MON1</fullName>
    </recommendedName>
</protein>
<sequence length="620" mass="68671">MTSESEPNTSLPFSPIQQTLPATPSRSTSQVSMVSAEALLSHSSPTKQLTPSHRSSLPSALPYNTLLNAPAGSPALRARASTASSSRAPSVLDDARVEHNDSETQVLEITPPMDNYELDGGSDHTSLPSDASSIKGKEKQRSNDRNEIETVGAGGEMALPSGDARKGLKELVRRSTTADKGYGGHDHRRLSEKLSQTDENLQILITQSDKMSYSPRLYYVLTNAGKPVFCSHTRPSEDDVTNLMGVAQALISIFADDDDRLRYIIKGNHRVAFLLKAPLYLFCVSDWGEPEHVLRLQLEYIHLQILSVVSSTQLLRLFQRRSNADLSTLLEGTEPFLSNLIDCSQYDFSFLTSTLQPLRMAPALRDTSAAALMPPSKFKDLLYVLLIAGGHIVTVLRPRKHSIHPSDLHLLLNTIASSSALRTTETWLPICFPKFNPSGFVHAYISYVLEDVGLVFVSADREAFEDLRVWKDMVLEKLEQDKTLSRIQEAIPLHPYTISSVGCPGLRHFIYKSRQHVQITQPIWEAPYEDGSTNQKRLVTTYQKLHDAVHAKSGQASALKLVYISTEHEACLVWATKPFELYITVSPQLSKSAVVAAANNVAKWVLAEEGRIFLKDAPVF</sequence>
<reference key="1">
    <citation type="journal article" date="2005" name="Science">
        <title>The genome of the basidiomycetous yeast and human pathogen Cryptococcus neoformans.</title>
        <authorList>
            <person name="Loftus B.J."/>
            <person name="Fung E."/>
            <person name="Roncaglia P."/>
            <person name="Rowley D."/>
            <person name="Amedeo P."/>
            <person name="Bruno D."/>
            <person name="Vamathevan J."/>
            <person name="Miranda M."/>
            <person name="Anderson I.J."/>
            <person name="Fraser J.A."/>
            <person name="Allen J.E."/>
            <person name="Bosdet I.E."/>
            <person name="Brent M.R."/>
            <person name="Chiu R."/>
            <person name="Doering T.L."/>
            <person name="Donlin M.J."/>
            <person name="D'Souza C.A."/>
            <person name="Fox D.S."/>
            <person name="Grinberg V."/>
            <person name="Fu J."/>
            <person name="Fukushima M."/>
            <person name="Haas B.J."/>
            <person name="Huang J.C."/>
            <person name="Janbon G."/>
            <person name="Jones S.J.M."/>
            <person name="Koo H.L."/>
            <person name="Krzywinski M.I."/>
            <person name="Kwon-Chung K.J."/>
            <person name="Lengeler K.B."/>
            <person name="Maiti R."/>
            <person name="Marra M.A."/>
            <person name="Marra R.E."/>
            <person name="Mathewson C.A."/>
            <person name="Mitchell T.G."/>
            <person name="Pertea M."/>
            <person name="Riggs F.R."/>
            <person name="Salzberg S.L."/>
            <person name="Schein J.E."/>
            <person name="Shvartsbeyn A."/>
            <person name="Shin H."/>
            <person name="Shumway M."/>
            <person name="Specht C.A."/>
            <person name="Suh B.B."/>
            <person name="Tenney A."/>
            <person name="Utterback T.R."/>
            <person name="Wickes B.L."/>
            <person name="Wortman J.R."/>
            <person name="Wye N.H."/>
            <person name="Kronstad J.W."/>
            <person name="Lodge J.K."/>
            <person name="Heitman J."/>
            <person name="Davis R.W."/>
            <person name="Fraser C.M."/>
            <person name="Hyman R.W."/>
        </authorList>
    </citation>
    <scope>NUCLEOTIDE SEQUENCE [LARGE SCALE GENOMIC DNA]</scope>
    <source>
        <strain>B-3501A</strain>
    </source>
</reference>
<accession>P0CO83</accession>
<accession>Q55TC3</accession>
<accession>Q5KJ15</accession>
<name>MON1_CRYNB</name>
<evidence type="ECO:0000250" key="1"/>
<evidence type="ECO:0000250" key="2">
    <source>
        <dbReference type="UniProtKB" id="P53129"/>
    </source>
</evidence>
<evidence type="ECO:0000256" key="3">
    <source>
        <dbReference type="SAM" id="MobiDB-lite"/>
    </source>
</evidence>
<evidence type="ECO:0000305" key="4"/>
<keyword id="KW-0072">Autophagy</keyword>
<keyword id="KW-0967">Endosome</keyword>
<keyword id="KW-0472">Membrane</keyword>
<keyword id="KW-0653">Protein transport</keyword>
<keyword id="KW-0813">Transport</keyword>
<keyword id="KW-0926">Vacuole</keyword>